<accession>Q2I2Q4</accession>
<evidence type="ECO:0000250" key="1"/>
<evidence type="ECO:0000250" key="2">
    <source>
        <dbReference type="UniProtKB" id="Q5EHP3"/>
    </source>
</evidence>
<evidence type="ECO:0000255" key="3"/>
<evidence type="ECO:0000305" key="4"/>
<evidence type="ECO:0000305" key="5">
    <source>
    </source>
</evidence>
<comment type="subcellular location">
    <subcellularLocation>
        <location evidence="4">Secreted</location>
    </subcellularLocation>
</comment>
<comment type="tissue specificity">
    <text evidence="5">Expressed by the venom duct.</text>
</comment>
<comment type="domain">
    <text evidence="4">The cysteine framework is III (CC-C-C-CC). Classified in the M-1 branch, since 1 residue stands between the fourth and the fifth cysteine residues.</text>
</comment>
<comment type="similarity">
    <text evidence="4">Belongs to the conotoxin M superfamily.</text>
</comment>
<feature type="signal peptide" evidence="3">
    <location>
        <begin position="1"/>
        <end position="24"/>
    </location>
</feature>
<feature type="propeptide" id="PRO_0000315527" evidence="1">
    <location>
        <begin position="25"/>
        <end position="53"/>
    </location>
</feature>
<feature type="peptide" id="PRO_0000315528" description="Conotoxin Lt3.2">
    <location>
        <begin position="56"/>
        <end position="70"/>
    </location>
</feature>
<feature type="disulfide bond" evidence="2">
    <location>
        <begin position="56"/>
        <end position="68"/>
    </location>
</feature>
<feature type="disulfide bond" evidence="2">
    <location>
        <begin position="57"/>
        <end position="66"/>
    </location>
</feature>
<feature type="disulfide bond" evidence="2">
    <location>
        <begin position="62"/>
        <end position="69"/>
    </location>
</feature>
<dbReference type="EMBL" id="DQ345378">
    <property type="protein sequence ID" value="ABC74986.1"/>
    <property type="molecule type" value="mRNA"/>
</dbReference>
<dbReference type="ConoServer" id="1164">
    <property type="toxin name" value="LtIIIB precursor"/>
</dbReference>
<dbReference type="GO" id="GO:0005576">
    <property type="term" value="C:extracellular region"/>
    <property type="evidence" value="ECO:0007669"/>
    <property type="project" value="UniProtKB-SubCell"/>
</dbReference>
<dbReference type="GO" id="GO:0008200">
    <property type="term" value="F:ion channel inhibitor activity"/>
    <property type="evidence" value="ECO:0007669"/>
    <property type="project" value="InterPro"/>
</dbReference>
<dbReference type="GO" id="GO:0090729">
    <property type="term" value="F:toxin activity"/>
    <property type="evidence" value="ECO:0007669"/>
    <property type="project" value="UniProtKB-KW"/>
</dbReference>
<dbReference type="InterPro" id="IPR004214">
    <property type="entry name" value="Conotoxin"/>
</dbReference>
<dbReference type="Pfam" id="PF02950">
    <property type="entry name" value="Conotoxin"/>
    <property type="match status" value="1"/>
</dbReference>
<organism>
    <name type="scientific">Conus litteratus</name>
    <name type="common">Lettered cone</name>
    <dbReference type="NCBI Taxonomy" id="89445"/>
    <lineage>
        <taxon>Eukaryota</taxon>
        <taxon>Metazoa</taxon>
        <taxon>Spiralia</taxon>
        <taxon>Lophotrochozoa</taxon>
        <taxon>Mollusca</taxon>
        <taxon>Gastropoda</taxon>
        <taxon>Caenogastropoda</taxon>
        <taxon>Neogastropoda</taxon>
        <taxon>Conoidea</taxon>
        <taxon>Conidae</taxon>
        <taxon>Conus</taxon>
        <taxon>Elisaconus</taxon>
    </lineage>
</organism>
<proteinExistence type="inferred from homology"/>
<sequence length="70" mass="8038">MLKIGVVLFTFLVLFPLATLQLDADQPVERYAENKQDLNPNERMKMIMSALGQRRCCISPACHEECYCCQ</sequence>
<reference key="1">
    <citation type="journal article" date="2006" name="Genomics">
        <title>Diversity and evolution of conotoxins based on gene expression profiling of Conus litteratus.</title>
        <authorList>
            <person name="Pi C."/>
            <person name="Liu J."/>
            <person name="Peng C."/>
            <person name="Liu Y."/>
            <person name="Jiang X."/>
            <person name="Zhao Y."/>
            <person name="Tang S."/>
            <person name="Wang L."/>
            <person name="Dong M."/>
            <person name="Chen S."/>
            <person name="Xu A."/>
        </authorList>
    </citation>
    <scope>NUCLEOTIDE SEQUENCE [MRNA]</scope>
    <source>
        <tissue>Venom duct</tissue>
    </source>
</reference>
<keyword id="KW-0165">Cleavage on pair of basic residues</keyword>
<keyword id="KW-1015">Disulfide bond</keyword>
<keyword id="KW-0964">Secreted</keyword>
<keyword id="KW-0732">Signal</keyword>
<keyword id="KW-0800">Toxin</keyword>
<protein>
    <recommendedName>
        <fullName>Conotoxin Lt3.2</fullName>
    </recommendedName>
    <alternativeName>
        <fullName>Lt3b</fullName>
    </alternativeName>
</protein>
<name>CM32_CONLT</name>